<sequence length="253" mass="26846">MLLTIDVGNTNTVLGVFDGDQLANSWRVRTDPRATADELGWLYRGLLGDHPIGGVSVCSTVPAALREIRRMVSRTFPAMPTVVVEPGTRTGVPILIDNPKEAGADRIMNTLAAHHLYGGPAIVVDFGTATNIDVVSARGEFLGGAFAPGIEVALDALASRAAQLRNVELTTPRSVIGKSTVEALQSGMIYGVVGQVDALVRRIRAELGTPATTIATGGLAPLVIKESETLDNHEPHLTLIGLRLVFEKNTEPR</sequence>
<gene>
    <name evidence="1" type="primary">coaX</name>
    <name type="ordered locus">Franean1_0196</name>
</gene>
<name>COAX_PARS2</name>
<feature type="chain" id="PRO_1000140244" description="Type III pantothenate kinase">
    <location>
        <begin position="1"/>
        <end position="253"/>
    </location>
</feature>
<feature type="active site" description="Proton acceptor" evidence="1">
    <location>
        <position position="105"/>
    </location>
</feature>
<feature type="binding site" evidence="1">
    <location>
        <begin position="6"/>
        <end position="13"/>
    </location>
    <ligand>
        <name>ATP</name>
        <dbReference type="ChEBI" id="CHEBI:30616"/>
    </ligand>
</feature>
<feature type="binding site" evidence="1">
    <location>
        <begin position="103"/>
        <end position="106"/>
    </location>
    <ligand>
        <name>substrate</name>
    </ligand>
</feature>
<feature type="binding site" evidence="1">
    <location>
        <position position="125"/>
    </location>
    <ligand>
        <name>K(+)</name>
        <dbReference type="ChEBI" id="CHEBI:29103"/>
    </ligand>
</feature>
<feature type="binding site" evidence="1">
    <location>
        <position position="128"/>
    </location>
    <ligand>
        <name>ATP</name>
        <dbReference type="ChEBI" id="CHEBI:30616"/>
    </ligand>
</feature>
<feature type="binding site" evidence="1">
    <location>
        <position position="180"/>
    </location>
    <ligand>
        <name>substrate</name>
    </ligand>
</feature>
<proteinExistence type="inferred from homology"/>
<dbReference type="EC" id="2.7.1.33" evidence="1"/>
<dbReference type="EMBL" id="CP000820">
    <property type="protein sequence ID" value="ABW09663.1"/>
    <property type="molecule type" value="Genomic_DNA"/>
</dbReference>
<dbReference type="RefSeq" id="WP_012157640.1">
    <property type="nucleotide sequence ID" value="NC_009921.1"/>
</dbReference>
<dbReference type="SMR" id="A8LCM4"/>
<dbReference type="STRING" id="298653.Franean1_0196"/>
<dbReference type="KEGG" id="fre:Franean1_0196"/>
<dbReference type="eggNOG" id="COG1521">
    <property type="taxonomic scope" value="Bacteria"/>
</dbReference>
<dbReference type="HOGENOM" id="CLU_066627_1_0_11"/>
<dbReference type="UniPathway" id="UPA00241">
    <property type="reaction ID" value="UER00352"/>
</dbReference>
<dbReference type="GO" id="GO:0005737">
    <property type="term" value="C:cytoplasm"/>
    <property type="evidence" value="ECO:0007669"/>
    <property type="project" value="UniProtKB-SubCell"/>
</dbReference>
<dbReference type="GO" id="GO:0005524">
    <property type="term" value="F:ATP binding"/>
    <property type="evidence" value="ECO:0007669"/>
    <property type="project" value="UniProtKB-UniRule"/>
</dbReference>
<dbReference type="GO" id="GO:0046872">
    <property type="term" value="F:metal ion binding"/>
    <property type="evidence" value="ECO:0007669"/>
    <property type="project" value="UniProtKB-KW"/>
</dbReference>
<dbReference type="GO" id="GO:0004594">
    <property type="term" value="F:pantothenate kinase activity"/>
    <property type="evidence" value="ECO:0007669"/>
    <property type="project" value="UniProtKB-UniRule"/>
</dbReference>
<dbReference type="GO" id="GO:0015937">
    <property type="term" value="P:coenzyme A biosynthetic process"/>
    <property type="evidence" value="ECO:0007669"/>
    <property type="project" value="UniProtKB-UniRule"/>
</dbReference>
<dbReference type="CDD" id="cd24015">
    <property type="entry name" value="ASKHA_NBD_PanK-III"/>
    <property type="match status" value="1"/>
</dbReference>
<dbReference type="Gene3D" id="3.30.420.40">
    <property type="match status" value="2"/>
</dbReference>
<dbReference type="HAMAP" id="MF_01274">
    <property type="entry name" value="Pantothen_kinase_3"/>
    <property type="match status" value="1"/>
</dbReference>
<dbReference type="InterPro" id="IPR043129">
    <property type="entry name" value="ATPase_NBD"/>
</dbReference>
<dbReference type="InterPro" id="IPR004619">
    <property type="entry name" value="Type_III_PanK"/>
</dbReference>
<dbReference type="NCBIfam" id="TIGR00671">
    <property type="entry name" value="baf"/>
    <property type="match status" value="1"/>
</dbReference>
<dbReference type="NCBIfam" id="NF009845">
    <property type="entry name" value="PRK13318.1-3"/>
    <property type="match status" value="1"/>
</dbReference>
<dbReference type="NCBIfam" id="NF009855">
    <property type="entry name" value="PRK13321.1"/>
    <property type="match status" value="1"/>
</dbReference>
<dbReference type="PANTHER" id="PTHR34265">
    <property type="entry name" value="TYPE III PANTOTHENATE KINASE"/>
    <property type="match status" value="1"/>
</dbReference>
<dbReference type="PANTHER" id="PTHR34265:SF1">
    <property type="entry name" value="TYPE III PANTOTHENATE KINASE"/>
    <property type="match status" value="1"/>
</dbReference>
<dbReference type="Pfam" id="PF03309">
    <property type="entry name" value="Pan_kinase"/>
    <property type="match status" value="1"/>
</dbReference>
<dbReference type="SUPFAM" id="SSF53067">
    <property type="entry name" value="Actin-like ATPase domain"/>
    <property type="match status" value="2"/>
</dbReference>
<evidence type="ECO:0000255" key="1">
    <source>
        <dbReference type="HAMAP-Rule" id="MF_01274"/>
    </source>
</evidence>
<comment type="function">
    <text evidence="1">Catalyzes the phosphorylation of pantothenate (Pan), the first step in CoA biosynthesis.</text>
</comment>
<comment type="catalytic activity">
    <reaction evidence="1">
        <text>(R)-pantothenate + ATP = (R)-4'-phosphopantothenate + ADP + H(+)</text>
        <dbReference type="Rhea" id="RHEA:16373"/>
        <dbReference type="ChEBI" id="CHEBI:10986"/>
        <dbReference type="ChEBI" id="CHEBI:15378"/>
        <dbReference type="ChEBI" id="CHEBI:29032"/>
        <dbReference type="ChEBI" id="CHEBI:30616"/>
        <dbReference type="ChEBI" id="CHEBI:456216"/>
        <dbReference type="EC" id="2.7.1.33"/>
    </reaction>
</comment>
<comment type="cofactor">
    <cofactor evidence="1">
        <name>NH4(+)</name>
        <dbReference type="ChEBI" id="CHEBI:28938"/>
    </cofactor>
    <cofactor evidence="1">
        <name>K(+)</name>
        <dbReference type="ChEBI" id="CHEBI:29103"/>
    </cofactor>
    <text evidence="1">A monovalent cation. Ammonium or potassium.</text>
</comment>
<comment type="pathway">
    <text evidence="1">Cofactor biosynthesis; coenzyme A biosynthesis; CoA from (R)-pantothenate: step 1/5.</text>
</comment>
<comment type="subunit">
    <text evidence="1">Homodimer.</text>
</comment>
<comment type="subcellular location">
    <subcellularLocation>
        <location evidence="1">Cytoplasm</location>
    </subcellularLocation>
</comment>
<comment type="similarity">
    <text evidence="1">Belongs to the type III pantothenate kinase family.</text>
</comment>
<protein>
    <recommendedName>
        <fullName evidence="1">Type III pantothenate kinase</fullName>
        <ecNumber evidence="1">2.7.1.33</ecNumber>
    </recommendedName>
    <alternativeName>
        <fullName evidence="1">PanK-III</fullName>
    </alternativeName>
    <alternativeName>
        <fullName evidence="1">Pantothenic acid kinase</fullName>
    </alternativeName>
</protein>
<reference key="1">
    <citation type="journal article" date="2007" name="Genome Res.">
        <title>Genome characteristics of facultatively symbiotic Frankia sp. strains reflect host range and host plant biogeography.</title>
        <authorList>
            <person name="Normand P."/>
            <person name="Lapierre P."/>
            <person name="Tisa L.S."/>
            <person name="Gogarten J.P."/>
            <person name="Alloisio N."/>
            <person name="Bagnarol E."/>
            <person name="Bassi C.A."/>
            <person name="Berry A.M."/>
            <person name="Bickhart D.M."/>
            <person name="Choisne N."/>
            <person name="Couloux A."/>
            <person name="Cournoyer B."/>
            <person name="Cruveiller S."/>
            <person name="Daubin V."/>
            <person name="Demange N."/>
            <person name="Francino M.P."/>
            <person name="Goltsman E."/>
            <person name="Huang Y."/>
            <person name="Kopp O.R."/>
            <person name="Labarre L."/>
            <person name="Lapidus A."/>
            <person name="Lavire C."/>
            <person name="Marechal J."/>
            <person name="Martinez M."/>
            <person name="Mastronunzio J.E."/>
            <person name="Mullin B.C."/>
            <person name="Niemann J."/>
            <person name="Pujic P."/>
            <person name="Rawnsley T."/>
            <person name="Rouy Z."/>
            <person name="Schenowitz C."/>
            <person name="Sellstedt A."/>
            <person name="Tavares F."/>
            <person name="Tomkins J.P."/>
            <person name="Vallenet D."/>
            <person name="Valverde C."/>
            <person name="Wall L.G."/>
            <person name="Wang Y."/>
            <person name="Medigue C."/>
            <person name="Benson D.R."/>
        </authorList>
    </citation>
    <scope>NUCLEOTIDE SEQUENCE [LARGE SCALE GENOMIC DNA]</scope>
    <source>
        <strain>EAN1pec</strain>
    </source>
</reference>
<accession>A8LCM4</accession>
<keyword id="KW-0067">ATP-binding</keyword>
<keyword id="KW-0173">Coenzyme A biosynthesis</keyword>
<keyword id="KW-0963">Cytoplasm</keyword>
<keyword id="KW-0418">Kinase</keyword>
<keyword id="KW-0479">Metal-binding</keyword>
<keyword id="KW-0547">Nucleotide-binding</keyword>
<keyword id="KW-0630">Potassium</keyword>
<keyword id="KW-0808">Transferase</keyword>
<organism>
    <name type="scientific">Parafrankia sp. (strain EAN1pec)</name>
    <dbReference type="NCBI Taxonomy" id="298653"/>
    <lineage>
        <taxon>Bacteria</taxon>
        <taxon>Bacillati</taxon>
        <taxon>Actinomycetota</taxon>
        <taxon>Actinomycetes</taxon>
        <taxon>Frankiales</taxon>
        <taxon>Frankiaceae</taxon>
        <taxon>Parafrankia</taxon>
    </lineage>
</organism>